<protein>
    <recommendedName>
        <fullName evidence="1">Ribonuclease PH</fullName>
        <shortName evidence="1">RNase PH</shortName>
        <ecNumber evidence="1">2.7.7.56</ecNumber>
    </recommendedName>
    <alternativeName>
        <fullName evidence="1">tRNA nucleotidyltransferase</fullName>
    </alternativeName>
</protein>
<dbReference type="EC" id="2.7.7.56" evidence="1"/>
<dbReference type="EMBL" id="AM286280">
    <property type="protein sequence ID" value="CAL08874.1"/>
    <property type="molecule type" value="Genomic_DNA"/>
</dbReference>
<dbReference type="RefSeq" id="WP_003020838.1">
    <property type="nucleotide sequence ID" value="NC_008245.1"/>
</dbReference>
<dbReference type="SMR" id="Q14HY4"/>
<dbReference type="KEGG" id="ftf:FTF0858"/>
<dbReference type="HOGENOM" id="CLU_050858_0_0_6"/>
<dbReference type="GO" id="GO:0000175">
    <property type="term" value="F:3'-5'-RNA exonuclease activity"/>
    <property type="evidence" value="ECO:0007669"/>
    <property type="project" value="UniProtKB-UniRule"/>
</dbReference>
<dbReference type="GO" id="GO:0000049">
    <property type="term" value="F:tRNA binding"/>
    <property type="evidence" value="ECO:0007669"/>
    <property type="project" value="UniProtKB-UniRule"/>
</dbReference>
<dbReference type="GO" id="GO:0009022">
    <property type="term" value="F:tRNA nucleotidyltransferase activity"/>
    <property type="evidence" value="ECO:0007669"/>
    <property type="project" value="UniProtKB-UniRule"/>
</dbReference>
<dbReference type="GO" id="GO:0016075">
    <property type="term" value="P:rRNA catabolic process"/>
    <property type="evidence" value="ECO:0007669"/>
    <property type="project" value="UniProtKB-UniRule"/>
</dbReference>
<dbReference type="GO" id="GO:0006364">
    <property type="term" value="P:rRNA processing"/>
    <property type="evidence" value="ECO:0007669"/>
    <property type="project" value="UniProtKB-KW"/>
</dbReference>
<dbReference type="GO" id="GO:0008033">
    <property type="term" value="P:tRNA processing"/>
    <property type="evidence" value="ECO:0007669"/>
    <property type="project" value="UniProtKB-UniRule"/>
</dbReference>
<dbReference type="CDD" id="cd11362">
    <property type="entry name" value="RNase_PH_bact"/>
    <property type="match status" value="1"/>
</dbReference>
<dbReference type="FunFam" id="3.30.230.70:FF:000003">
    <property type="entry name" value="Ribonuclease PH"/>
    <property type="match status" value="1"/>
</dbReference>
<dbReference type="Gene3D" id="3.30.230.70">
    <property type="entry name" value="GHMP Kinase, N-terminal domain"/>
    <property type="match status" value="1"/>
</dbReference>
<dbReference type="HAMAP" id="MF_00564">
    <property type="entry name" value="RNase_PH"/>
    <property type="match status" value="1"/>
</dbReference>
<dbReference type="InterPro" id="IPR001247">
    <property type="entry name" value="ExoRNase_PH_dom1"/>
</dbReference>
<dbReference type="InterPro" id="IPR015847">
    <property type="entry name" value="ExoRNase_PH_dom2"/>
</dbReference>
<dbReference type="InterPro" id="IPR036345">
    <property type="entry name" value="ExoRNase_PH_dom2_sf"/>
</dbReference>
<dbReference type="InterPro" id="IPR027408">
    <property type="entry name" value="PNPase/RNase_PH_dom_sf"/>
</dbReference>
<dbReference type="InterPro" id="IPR020568">
    <property type="entry name" value="Ribosomal_Su5_D2-typ_SF"/>
</dbReference>
<dbReference type="InterPro" id="IPR050080">
    <property type="entry name" value="RNase_PH"/>
</dbReference>
<dbReference type="InterPro" id="IPR002381">
    <property type="entry name" value="RNase_PH_bac-type"/>
</dbReference>
<dbReference type="InterPro" id="IPR018336">
    <property type="entry name" value="RNase_PH_CS"/>
</dbReference>
<dbReference type="NCBIfam" id="TIGR01966">
    <property type="entry name" value="RNasePH"/>
    <property type="match status" value="1"/>
</dbReference>
<dbReference type="PANTHER" id="PTHR11953">
    <property type="entry name" value="EXOSOME COMPLEX COMPONENT"/>
    <property type="match status" value="1"/>
</dbReference>
<dbReference type="PANTHER" id="PTHR11953:SF0">
    <property type="entry name" value="EXOSOME COMPLEX COMPONENT RRP41"/>
    <property type="match status" value="1"/>
</dbReference>
<dbReference type="Pfam" id="PF01138">
    <property type="entry name" value="RNase_PH"/>
    <property type="match status" value="1"/>
</dbReference>
<dbReference type="Pfam" id="PF03725">
    <property type="entry name" value="RNase_PH_C"/>
    <property type="match status" value="1"/>
</dbReference>
<dbReference type="SUPFAM" id="SSF55666">
    <property type="entry name" value="Ribonuclease PH domain 2-like"/>
    <property type="match status" value="1"/>
</dbReference>
<dbReference type="SUPFAM" id="SSF54211">
    <property type="entry name" value="Ribosomal protein S5 domain 2-like"/>
    <property type="match status" value="1"/>
</dbReference>
<dbReference type="PROSITE" id="PS01277">
    <property type="entry name" value="RIBONUCLEASE_PH"/>
    <property type="match status" value="1"/>
</dbReference>
<accession>Q14HY4</accession>
<name>RNPH_FRAT1</name>
<sequence>MRPSGRNNDQLRNLKVTHNFTKHAEGSVLIEFGDTKVICTASVVAGVPKFKKDSGEGWLTAEYGMLPRSTHTRMDREAARGKQSGRTQEIQRLIGRALRASVDLTAIGENTIKVDCDVIQADGGTRTASITGASLAIADAIEYMKQNGMLDEQANPLLSQVAAISVGIYNNEPVLDLDYDEDSNAETDMNVVMNSNGGIIEIQGTAEGKDFSEEEFAKMLGLAKKGIKEIFATVF</sequence>
<gene>
    <name evidence="1" type="primary">rph</name>
    <name type="ordered locus">FTF0858</name>
</gene>
<feature type="chain" id="PRO_1000024806" description="Ribonuclease PH">
    <location>
        <begin position="1"/>
        <end position="235"/>
    </location>
</feature>
<feature type="binding site" evidence="1">
    <location>
        <position position="86"/>
    </location>
    <ligand>
        <name>phosphate</name>
        <dbReference type="ChEBI" id="CHEBI:43474"/>
        <note>substrate</note>
    </ligand>
</feature>
<feature type="binding site" evidence="1">
    <location>
        <begin position="124"/>
        <end position="126"/>
    </location>
    <ligand>
        <name>phosphate</name>
        <dbReference type="ChEBI" id="CHEBI:43474"/>
        <note>substrate</note>
    </ligand>
</feature>
<proteinExistence type="inferred from homology"/>
<reference key="1">
    <citation type="journal article" date="2007" name="PLoS ONE">
        <title>Genome sequencing shows that European isolates of Francisella tularensis subspecies tularensis are almost identical to US laboratory strain Schu S4.</title>
        <authorList>
            <person name="Chaudhuri R.R."/>
            <person name="Ren C.-P."/>
            <person name="Desmond L."/>
            <person name="Vincent G.A."/>
            <person name="Silman N.J."/>
            <person name="Brehm J.K."/>
            <person name="Elmore M.J."/>
            <person name="Hudson M.J."/>
            <person name="Forsman M."/>
            <person name="Isherwood K.E."/>
            <person name="Gurycova D."/>
            <person name="Minton N.P."/>
            <person name="Titball R.W."/>
            <person name="Pallen M.J."/>
            <person name="Vipond R."/>
        </authorList>
    </citation>
    <scope>NUCLEOTIDE SEQUENCE [LARGE SCALE GENOMIC DNA]</scope>
    <source>
        <strain>FSC 198</strain>
    </source>
</reference>
<organism>
    <name type="scientific">Francisella tularensis subsp. tularensis (strain FSC 198)</name>
    <dbReference type="NCBI Taxonomy" id="393115"/>
    <lineage>
        <taxon>Bacteria</taxon>
        <taxon>Pseudomonadati</taxon>
        <taxon>Pseudomonadota</taxon>
        <taxon>Gammaproteobacteria</taxon>
        <taxon>Thiotrichales</taxon>
        <taxon>Francisellaceae</taxon>
        <taxon>Francisella</taxon>
    </lineage>
</organism>
<evidence type="ECO:0000255" key="1">
    <source>
        <dbReference type="HAMAP-Rule" id="MF_00564"/>
    </source>
</evidence>
<keyword id="KW-0548">Nucleotidyltransferase</keyword>
<keyword id="KW-0694">RNA-binding</keyword>
<keyword id="KW-0698">rRNA processing</keyword>
<keyword id="KW-0808">Transferase</keyword>
<keyword id="KW-0819">tRNA processing</keyword>
<keyword id="KW-0820">tRNA-binding</keyword>
<comment type="function">
    <text evidence="1">Phosphorolytic 3'-5' exoribonuclease that plays an important role in tRNA 3'-end maturation. Removes nucleotide residues following the 3'-CCA terminus of tRNAs; can also add nucleotides to the ends of RNA molecules by using nucleoside diphosphates as substrates, but this may not be physiologically important. Probably plays a role in initiation of 16S rRNA degradation (leading to ribosome degradation) during starvation.</text>
</comment>
<comment type="catalytic activity">
    <reaction evidence="1">
        <text>tRNA(n+1) + phosphate = tRNA(n) + a ribonucleoside 5'-diphosphate</text>
        <dbReference type="Rhea" id="RHEA:10628"/>
        <dbReference type="Rhea" id="RHEA-COMP:17343"/>
        <dbReference type="Rhea" id="RHEA-COMP:17344"/>
        <dbReference type="ChEBI" id="CHEBI:43474"/>
        <dbReference type="ChEBI" id="CHEBI:57930"/>
        <dbReference type="ChEBI" id="CHEBI:173114"/>
        <dbReference type="EC" id="2.7.7.56"/>
    </reaction>
</comment>
<comment type="subunit">
    <text evidence="1">Homohexameric ring arranged as a trimer of dimers.</text>
</comment>
<comment type="similarity">
    <text evidence="1">Belongs to the RNase PH family.</text>
</comment>